<sequence>MANCRPLPIGQLPNRIFDTPRLTPGWVWACTSEATFKLEWLQDPVVIRPPDVFVAQGVVDDFFRPKRVLQGDPQLIAQVLLGDANGPLVGPVSMQQLTSLLHEVSQALSDHKHPLANRYTRASLQRYADTLSNYIPLVDILTGPKDLTPRDVLEQLAAGREWECVPDSALKKVFRDMWQYICEGCDSVYIKLQDVKRKMPHIDTTVLKQFIITLTDTISMATALDTKTWLAHILGWLKPTCLVMIMQQHVNSPQGWAATLTALAELYYGIMPLTETLGSVASWVTDKFADMATSTWGKFKSWWDSLYTPQAGNDLIILGGVVGLVYFMVFGDAPTQMFTKKLMRVCGFITSTVAAIKAAMWIVDYFKQREHEHQVRITLARWAALQEVIKQNRCAGLSEVTKLKECCEVLLNEVTELMYKLGASPLAGLIRSTSDVIQTTINELAQLMAYDTQRKPPAMVVFGGPPGIGKTRLVEALAKQLGEVSHFTMTVDHYDTYTGNTVAIWDEFDVDSKQAFIEATIGIVNCAPYPLNCDRPEAKGRVFTSKYVLATTNCPTPVMPDHPRAMAFWRRITFIDVTAPTIEQWLVDNPGRKAPTSLFKDDFSHLQCSVRGYTAYDEKGNTLSGKVARARYVSVNNLLDLIKEKYNSEAADVKHLWFTVPQAIHKQARDIILGWLRFHSYPNTVADNIPLSEVRDPTCFGYVVISDVDPPRHVAEHVAHIEVESILRTDIVGLLREGGGGLFRALKVKSAPRNCIINKVMMQAHHTTLQVLTSQEPHPPNLPRPRRLVFVESPIDIISALRHHVGFCTIPGIVKLITSGVGLGVENLGNFLQSIAGNVRFPLQSECSLLRTPSGDVLFYTSGQAAVWATPARFPIVTPGEASVGKEVCSESSWWDILKALFSTLVVAFGPIATLVLTAHNLAYLNTRENTLSEAKGKNKRGRGARRAIALRDDEYDEWQDIIRDWRKEMTVQQFLDLKERALSGASDPDSQRYNAWLELRAKRLSAGAYQHAVVDIIGKSGHRREVIRTQVMRAPREPKGDTYDSEGRGYVVPMTAQEKHTGWAVHIGNGRLVTCTHVANMCDRVAEVEFKVAETDRDTCIITAPLGHLPSVALGNGPPAFYTTNFHPIRVLDEGSWDTTTTRVTGWRVVINNGTTTAPGDCGQPYLNARRQLVGVHAATSTCGVKKLVSRVQTKKTAKATFPWKGLPVTTMPDAGGLPTGTRYHRSIAWPKLLPEETHAPAPYGVNDPRHPFSQHQMIANNLQPYINTPVALDQTLLQRAVKHTKGYLDQIIGTHRSPNLTYAAAVESMAHDTACGPNLPGRKKDYMTDQGEPIGPLKQMLEEAWDMAHRGVPRRHEYKLALKDELRPIEKNDQGKKRLLWGCDAGVSMIANAVFKPVTERLVDTVPMHPVAVGICMDSPQIEQMNQALTGRVLYCLDYSKWDSTQNPAVTCASVDILASYAEDTPLSSAAIATLCSPAVGRLDDIGLTVTSGLPSGMPFTSVINSVNHMIYFAMAVLEAYEEFKVPYMGNIFDNETIYTYGDDCVYGLTPATASIMPVVVKNLTSYGLVPTAADKSQSIEPTDTPVFLKRTFSQTPFGLRALLDETSLARQCYWVKANRTTDLFEPAAVDVDIRKNQLEVMLAYASQHPRSVFDKLAGMAEVTASAEGYQLVNVNWANAVATYNAWYGGTDGGRAPTNEDEEPEVFVMEAPAPTRSVASNPEGTQNSNESRPVQPAGPMPVAAAQALEMAVATGQINDTIPSVVRETFSTYTNVTWTTRQPTGTLLARMSLGPGLNPYTLHLSAMWAGWGGSFEIKVIISGSGMYAGKLLCALIPPGVDPSAVDQPGAFPHALVDARITDGVTFTLGDVRAVDYHETGVGGAIASLALYVYQPLINPFETAVSAAMVTIETRPGPDFGFTLLKPPNQAMEVGFDPRSLLPRTARTLRGNRFGRPITAVVIVGVAQQINRHFSAEGTTLGWSTAPIGPCVARVNGKHTDNTGRAVFQLGPLSNGPLYPNIINHYPDVAASTIFNTGTAVNDNTTGGGGPMVIFNDVGDVVEDVAYQMRFIASHATSQSPTLIDQINATSMAVCSFGNSRADLNQNQLNVGIELTYTCGNTAINGIVTSFMDRQYTFGPQGPNNIMLWVESVLGTHTGNNTVYSSQPDTVSAALQGQPFNIPDGYMAVWNVNADSADFQIGLRRDGYFVTNGAIGTRMVISEDTTFSFNGMYTLTTPLIGPSGTSGRSIHSSR</sequence>
<comment type="function">
    <molecule>NS2</molecule>
    <text evidence="3 5">Together with NTPase and NS4, initiates the formation of the replication complex (By similarity). Induces the proliferation of the host smooth ER membranes forming long tubular structures (By similarity). These remodeled membranes probably form the viral factories that contain the replication complex (By similarity).</text>
</comment>
<comment type="function">
    <molecule>NTPase</molecule>
    <text evidence="3 4 5">Displays NTPase activity, but no helicase activity (By similarity). Induces the formation of convoluted membranes derived from the host ER (By similarity). These remodeled membranes probably form the viral factories that contain the replication complex (By similarity). Together with NS2 and NS4, initiates the formation of the replication complex (By similarity).</text>
</comment>
<comment type="function">
    <molecule>NS4</molecule>
    <text evidence="3 5">Probable key protein responsible for the formation of membrane alterations by the virus (By similarity). Induces the formation of convoluted membranes derived from the host ER (By similarity). These remodeled membranes probably form the viral factories that contain the replication complex (By similarity). Together with NS2 and NTPase, initiates the formation of the replication complex (By similarity).</text>
</comment>
<comment type="function">
    <molecule>Viral genome-linked protein</molecule>
    <text evidence="2 13">Viral genome-linked protein is covalently linked to the 5'-end of the positive-strand, negative-strand genomic RNAs and subgenomic RNA. Acts as a genome-linked replication primer. May recruit ribosome to viral RNA thereby promoting viral proteins translation (By similarity). Interacts with host translation initiation complex to allow the translation of viral proteins (PubMed:25142584).</text>
</comment>
<comment type="function">
    <molecule>Protease-polymerase p70</molecule>
    <text evidence="5">Protease-polymerase p76 processes the polyprotein: Pro-Pol is first released by autocleavage, then all other proteins are cleaved (By similarity). Cleaves host translation initiation factor eIF4G1, eIF4G2 and PABP1 thereby inducing a shutdown of host protein synthesis (By similarity). This shutdown may not prevent viral mRNA from being translated since viral Vpg replaces the cap (By similarity). It is also an RNA-directed RNA polymerase which replicates genomic and antigenomic viral RNA by recognizing specific signals (By similarity). Also transcribes a subgenomic mRNA by initiating RNA synthesis internally on antigenomic RNA (By similarity). This sgRNA codes for structural proteins. Catalyzes the covalent attachment VPg with viral RNAs (By similarity).</text>
</comment>
<comment type="function">
    <molecule>Capsid protein</molecule>
    <text evidence="1 16">Capsid protein self assembles to form an icosahedral capsid with a T=3 symmetry, about 38 nm in diameter, and consisting of 180 capsid proteins (Probable). The capsid encapsulate the genomic RNA and VP2 proteins. Attaches virion to target cells, inducing endocytosis of the viral particle. Acidification of the endosome induces conformational change of capsid protein thereby injecting virus genomic RNA into host cytoplasm (By similarity).</text>
</comment>
<comment type="catalytic activity">
    <molecule>NTPase</molecule>
    <reaction evidence="4">
        <text>a ribonucleoside 5'-triphosphate + H2O = a ribonucleoside 5'-diphosphate + phosphate + H(+)</text>
        <dbReference type="Rhea" id="RHEA:23680"/>
        <dbReference type="ChEBI" id="CHEBI:15377"/>
        <dbReference type="ChEBI" id="CHEBI:15378"/>
        <dbReference type="ChEBI" id="CHEBI:43474"/>
        <dbReference type="ChEBI" id="CHEBI:57930"/>
        <dbReference type="ChEBI" id="CHEBI:61557"/>
        <dbReference type="EC" id="3.6.1.15"/>
    </reaction>
</comment>
<comment type="catalytic activity">
    <molecule>Protease-polymerase p70</molecule>
    <reaction evidence="8">
        <text>RNA(n) + a ribonucleoside 5'-triphosphate = RNA(n+1) + diphosphate</text>
        <dbReference type="Rhea" id="RHEA:21248"/>
        <dbReference type="Rhea" id="RHEA-COMP:14527"/>
        <dbReference type="Rhea" id="RHEA-COMP:17342"/>
        <dbReference type="ChEBI" id="CHEBI:33019"/>
        <dbReference type="ChEBI" id="CHEBI:61557"/>
        <dbReference type="ChEBI" id="CHEBI:140395"/>
        <dbReference type="EC" id="2.7.7.48"/>
    </reaction>
</comment>
<comment type="catalytic activity">
    <molecule>Protease-polymerase p70</molecule>
    <reaction evidence="10">
        <text>Endopeptidase with a preference for cleavage when the P1 position is occupied by Glu-|-Xaa and the P1' position is occupied by Gly-|-Yaa.</text>
        <dbReference type="EC" id="3.4.22.66"/>
    </reaction>
</comment>
<comment type="subunit">
    <molecule>Capsid protein</molecule>
    <text evidence="12">Homodimer. Homomultimer.</text>
</comment>
<comment type="subunit">
    <text evidence="13">Interacts with host IEF4E; this interaction plays a role in translation of viral proteins.</text>
</comment>
<comment type="subcellular location">
    <molecule>Capsid protein</molecule>
    <subcellularLocation>
        <location>Virion</location>
    </subcellularLocation>
    <subcellularLocation>
        <location>Host cytoplasm</location>
    </subcellularLocation>
</comment>
<comment type="alternative products">
    <event type="alternative promoter"/>
    <isoform>
        <id>Q9QEJ5-1</id>
        <name>Genome polyprotein</name>
        <sequence type="displayed"/>
    </isoform>
    <isoform>
        <id>Q9QEJ5-2</id>
        <name>Subgenomic capsid protein</name>
        <name>VP1</name>
        <sequence type="described" ref="VSP_034378"/>
    </isoform>
</comment>
<comment type="domain">
    <molecule>Viral genome-linked protein</molecule>
    <text evidence="14">Contains a compact core domain in the N-terminus half that is composed of a three-helix bundle.</text>
</comment>
<comment type="domain">
    <molecule>Protease-polymerase p70</molecule>
    <text>Protease-polymerase is composed of two domains displaying two different catalytic activity. These activities may act independently.</text>
</comment>
<comment type="PTM">
    <molecule>Genome polyprotein</molecule>
    <text evidence="5">Specific enzymatic cleavages in vivo yield mature proteins (By similarity). Pro-Pol is first autocatalytically cleaved, then processes the whole polyprotein (By similarity).</text>
</comment>
<comment type="PTM">
    <molecule>Viral genome-linked protein</molecule>
    <text evidence="5 13">VPg is uridylylated by the polymerase and is covalently attached to the 5'-end of the polyadenylated genomic and subgenomic RNAs (PubMed:25142584). This uridylylated form acts as a nucleotide-peptide primer for the polymerase (By similarity).</text>
</comment>
<comment type="miscellaneous">
    <text evidence="1">Two different RNAs lead the expression of the capsid protein. One arises from the cleavage of the polyprotein translated from the genomic RNA and the other from the translation of a subgenomic RNA derived from the (-)RNA template. Capsid protein expressed from the subgenomic mRNA is produced in much larger amounts than the cleaved one (By similarity).</text>
</comment>
<comment type="miscellaneous">
    <molecule>Isoform Genome polyprotein</molecule>
    <text>Produced from the genomic RNA.</text>
</comment>
<comment type="miscellaneous">
    <molecule>Isoform Subgenomic capsid protein</molecule>
    <text evidence="15">Produced from the subgenomic RNA.</text>
</comment>
<reference key="1">
    <citation type="journal article" date="1999" name="J. Virol.">
        <title>Molecular characterization of a porcine enteric calicivirus genetically related to Sapporo-like human caliciviruses.</title>
        <authorList>
            <person name="Guo M."/>
            <person name="Chang K.O."/>
            <person name="Hardy M.E."/>
            <person name="Zhang Q."/>
            <person name="Parwani A.V."/>
            <person name="Saif L.J."/>
        </authorList>
    </citation>
    <scope>NUCLEOTIDE SEQUENCE [GENOMIC RNA]</scope>
</reference>
<reference key="2">
    <citation type="journal article" date="2001" name="J. Clin. Microbiol.">
        <title>Expression and self-assembly in baculovirus of porcine enteric calicivirus capsids into virus-like particles and their use in an enzyme-linked immunosorbent assay for antibody detection in swine.</title>
        <authorList>
            <person name="Guo M."/>
            <person name="Qian Y."/>
            <person name="Chang K.O."/>
            <person name="Saif L.J."/>
        </authorList>
    </citation>
    <scope>FUNCTION (CAPSID PROTEIN)</scope>
</reference>
<reference key="3">
    <citation type="journal article" date="2014" name="J. Virol.">
        <title>Sapovirus translation requires an interaction between VPg and the cap binding protein eIF4E.</title>
        <authorList>
            <person name="Hosmillo M."/>
            <person name="Chaudhry Y."/>
            <person name="Kim D.S."/>
            <person name="Goodfellow I."/>
            <person name="Cho K.O."/>
        </authorList>
    </citation>
    <scope>INTERACTION WITH HOST EIF4E (VIRAL GENOME-LINKED PROTEIN)</scope>
    <scope>FUNCTION (VIRAL GENOME-LINKED PROTEIN)</scope>
    <scope>COVALENT RNA LINKAGE (VIRAL GENOME-LINKED PROTEIN)</scope>
</reference>
<reference evidence="17" key="4">
    <citation type="journal article" date="2015" name="Biochem. Biophys. Res. Commun.">
        <title>Solution structure of the porcine sapovirus VPg core reveals a stable three-helical bundle with a conserved surface patch.</title>
        <authorList>
            <person name="Hwang H.J."/>
            <person name="Min H.J."/>
            <person name="Yun H."/>
            <person name="Pelton J.G."/>
            <person name="Wemmer D.E."/>
            <person name="Cho K.O."/>
            <person name="Kim J.S."/>
            <person name="Lee C.W."/>
        </authorList>
    </citation>
    <scope>STRUCTURE BY NMR OF 948-1006</scope>
    <scope>DOMAIN (VIRAL GENOME-LINKED PROTEIN)</scope>
</reference>
<name>POLG_PESV</name>
<proteinExistence type="evidence at protein level"/>
<keyword id="KW-0002">3D-structure</keyword>
<keyword id="KW-0877">Alternative promoter usage</keyword>
<keyword id="KW-0067">ATP-binding</keyword>
<keyword id="KW-0167">Capsid protein</keyword>
<keyword id="KW-0191">Covalent protein-RNA linkage</keyword>
<keyword id="KW-0235">DNA replication</keyword>
<keyword id="KW-1035">Host cytoplasm</keyword>
<keyword id="KW-0378">Hydrolase</keyword>
<keyword id="KW-0547">Nucleotide-binding</keyword>
<keyword id="KW-0548">Nucleotidyltransferase</keyword>
<keyword id="KW-0597">Phosphoprotein</keyword>
<keyword id="KW-0645">Protease</keyword>
<keyword id="KW-0696">RNA-directed RNA polymerase</keyword>
<keyword id="KW-0788">Thiol protease</keyword>
<keyword id="KW-0808">Transferase</keyword>
<keyword id="KW-0693">Viral RNA replication</keyword>
<keyword id="KW-0946">Virion</keyword>
<evidence type="ECO:0000250" key="1"/>
<evidence type="ECO:0000250" key="2">
    <source>
        <dbReference type="UniProtKB" id="P27409"/>
    </source>
</evidence>
<evidence type="ECO:0000250" key="3">
    <source>
        <dbReference type="UniProtKB" id="P54634"/>
    </source>
</evidence>
<evidence type="ECO:0000250" key="4">
    <source>
        <dbReference type="UniProtKB" id="Q04544"/>
    </source>
</evidence>
<evidence type="ECO:0000250" key="5">
    <source>
        <dbReference type="UniProtKB" id="Q66914"/>
    </source>
</evidence>
<evidence type="ECO:0000250" key="6">
    <source>
        <dbReference type="UniProtKB" id="Q69014"/>
    </source>
</evidence>
<evidence type="ECO:0000250" key="7">
    <source>
        <dbReference type="UniProtKB" id="Q6XDK8"/>
    </source>
</evidence>
<evidence type="ECO:0000255" key="8">
    <source>
        <dbReference type="PROSITE-ProRule" id="PRU00539"/>
    </source>
</evidence>
<evidence type="ECO:0000255" key="9">
    <source>
        <dbReference type="PROSITE-ProRule" id="PRU00551"/>
    </source>
</evidence>
<evidence type="ECO:0000255" key="10">
    <source>
        <dbReference type="PROSITE-ProRule" id="PRU01242"/>
    </source>
</evidence>
<evidence type="ECO:0000256" key="11">
    <source>
        <dbReference type="SAM" id="MobiDB-lite"/>
    </source>
</evidence>
<evidence type="ECO:0000269" key="12">
    <source>
    </source>
</evidence>
<evidence type="ECO:0000269" key="13">
    <source>
    </source>
</evidence>
<evidence type="ECO:0000269" key="14">
    <source>
    </source>
</evidence>
<evidence type="ECO:0000305" key="15"/>
<evidence type="ECO:0000305" key="16">
    <source>
    </source>
</evidence>
<evidence type="ECO:0007744" key="17">
    <source>
        <dbReference type="PDB" id="2MXD"/>
    </source>
</evidence>
<evidence type="ECO:0007829" key="18">
    <source>
        <dbReference type="PDB" id="2MXD"/>
    </source>
</evidence>
<organism>
    <name type="scientific">Porcine enteric sapovirus (isolate Swine/United States/Cowden/1980)</name>
    <name type="common">Sw/SV/Cowden/1980/US</name>
    <dbReference type="NCBI Taxonomy" id="523795"/>
    <lineage>
        <taxon>Viruses</taxon>
        <taxon>Riboviria</taxon>
        <taxon>Orthornavirae</taxon>
        <taxon>Pisuviricota</taxon>
        <taxon>Pisoniviricetes</taxon>
        <taxon>Picornavirales</taxon>
        <taxon>Caliciviridae</taxon>
        <taxon>Sapovirus</taxon>
        <taxon>Sapporo virus</taxon>
    </lineage>
</organism>
<feature type="chain" id="PRO_0000341637" description="Genome polyprotein">
    <location>
        <begin position="1"/>
        <end position="2254"/>
    </location>
</feature>
<feature type="chain" id="PRO_0000341638" description="NS1">
    <location>
        <begin position="1"/>
        <end position="56"/>
    </location>
</feature>
<feature type="chain" id="PRO_0000341639" description="NS2">
    <location>
        <begin position="57"/>
        <end position="310"/>
    </location>
</feature>
<feature type="chain" id="PRO_0000341640" description="NTPase">
    <location>
        <begin position="311"/>
        <end position="650"/>
    </location>
</feature>
<feature type="chain" id="PRO_0000341641" description="NS4">
    <location>
        <begin position="651"/>
        <end position="934"/>
    </location>
</feature>
<feature type="chain" id="PRO_0000341642" description="Viral genome-linked protein">
    <location>
        <begin position="935"/>
        <end position="1048"/>
    </location>
</feature>
<feature type="chain" id="PRO_0000341643" description="Protease-polymerase p70">
    <location>
        <begin position="1049"/>
        <end position="1712"/>
    </location>
</feature>
<feature type="chain" id="PRO_0000341644" description="Capsid protein">
    <location>
        <begin position="1713"/>
        <end position="2254"/>
    </location>
</feature>
<feature type="domain" description="SF3 helicase" evidence="9">
    <location>
        <begin position="438"/>
        <end position="592"/>
    </location>
</feature>
<feature type="domain" description="Peptidase C24" evidence="10">
    <location>
        <begin position="1041"/>
        <end position="1196"/>
    </location>
</feature>
<feature type="domain" description="RdRp catalytic" evidence="8">
    <location>
        <begin position="1434"/>
        <end position="1559"/>
    </location>
</feature>
<feature type="region of interest" description="Disordered" evidence="11">
    <location>
        <begin position="1714"/>
        <end position="1742"/>
    </location>
</feature>
<feature type="compositionally biased region" description="Polar residues" evidence="11">
    <location>
        <begin position="1719"/>
        <end position="1734"/>
    </location>
</feature>
<feature type="active site" description="For 3CLpro activity" evidence="10">
    <location>
        <position position="1078"/>
    </location>
</feature>
<feature type="active site" description="For 3CLpro activity" evidence="10">
    <location>
        <position position="1099"/>
    </location>
</feature>
<feature type="active site" description="For 3CLpro activity" evidence="10">
    <location>
        <position position="1163"/>
    </location>
</feature>
<feature type="binding site" evidence="9">
    <location>
        <begin position="464"/>
        <end position="471"/>
    </location>
    <ligand>
        <name>ATP</name>
        <dbReference type="ChEBI" id="CHEBI:30616"/>
    </ligand>
</feature>
<feature type="site" description="Cleavage; by Pro-Pol" evidence="7">
    <location>
        <begin position="56"/>
        <end position="57"/>
    </location>
</feature>
<feature type="site" description="Cleavage; by Pro-Pol" evidence="7">
    <location>
        <begin position="310"/>
        <end position="311"/>
    </location>
</feature>
<feature type="site" description="Cleavage; by Pro-Pol" evidence="7">
    <location>
        <begin position="649"/>
        <end position="650"/>
    </location>
</feature>
<feature type="site" description="Cleavage; by Pro-Pol" evidence="7">
    <location>
        <begin position="934"/>
        <end position="935"/>
    </location>
</feature>
<feature type="site" description="Cleavage; by Pro-Pol" evidence="7">
    <location>
        <begin position="1047"/>
        <end position="1048"/>
    </location>
</feature>
<feature type="site" description="Cleavage; by Pro-Pol" evidence="7">
    <location>
        <begin position="1712"/>
        <end position="1713"/>
    </location>
</feature>
<feature type="modified residue" description="O-(5'-phospho-RNA)-tyrosine" evidence="2">
    <location>
        <position position="956"/>
    </location>
</feature>
<feature type="splice variant" id="VSP_034378" description="In isoform Subgenomic capsid protein." evidence="15">
    <location>
        <begin position="1"/>
        <end position="1710"/>
    </location>
</feature>
<feature type="helix" evidence="18">
    <location>
        <begin position="953"/>
        <end position="966"/>
    </location>
</feature>
<feature type="helix" evidence="18">
    <location>
        <begin position="972"/>
        <end position="983"/>
    </location>
</feature>
<feature type="helix" evidence="18">
    <location>
        <begin position="989"/>
        <end position="1003"/>
    </location>
</feature>
<organismHost>
    <name type="scientific">Sus scrofa</name>
    <name type="common">Pig</name>
    <dbReference type="NCBI Taxonomy" id="9823"/>
</organismHost>
<gene>
    <name type="ORF">ORF1</name>
</gene>
<accession>Q9QEJ5</accession>
<protein>
    <recommendedName>
        <fullName>Genome polyprotein</fullName>
    </recommendedName>
    <component>
        <recommendedName>
            <fullName>NS1</fullName>
        </recommendedName>
        <alternativeName>
            <fullName>Protein p11</fullName>
        </alternativeName>
    </component>
    <component>
        <recommendedName>
            <fullName>NS2</fullName>
        </recommendedName>
        <alternativeName>
            <fullName>Protein p28</fullName>
        </alternativeName>
    </component>
    <component>
        <recommendedName>
            <fullName>NTPase</fullName>
            <ecNumber evidence="4">3.6.1.15</ecNumber>
        </recommendedName>
        <alternativeName>
            <fullName>NS3</fullName>
        </alternativeName>
        <alternativeName>
            <fullName>p35</fullName>
        </alternativeName>
    </component>
    <component>
        <recommendedName>
            <fullName>NS4</fullName>
        </recommendedName>
        <alternativeName>
            <fullName>Protein p32</fullName>
        </alternativeName>
    </component>
    <component>
        <recommendedName>
            <fullName>Viral genome-linked protein</fullName>
            <shortName>VPg</shortName>
        </recommendedName>
        <alternativeName>
            <fullName>NS5</fullName>
        </alternativeName>
        <alternativeName>
            <fullName>p14</fullName>
        </alternativeName>
    </component>
    <component>
        <recommendedName>
            <fullName>Protease-polymerase p70</fullName>
            <shortName>Pro-Pol</shortName>
            <ecNumber evidence="6">2.7.7.48</ecNumber>
            <ecNumber evidence="7">3.4.22.66</ecNumber>
        </recommendedName>
        <alternativeName>
            <fullName>NS6-7</fullName>
        </alternativeName>
    </component>
    <component>
        <recommendedName>
            <fullName>Capsid protein</fullName>
            <shortName>CP</shortName>
        </recommendedName>
        <alternativeName>
            <fullName>VP1</fullName>
        </alternativeName>
        <alternativeName>
            <fullName>p60</fullName>
        </alternativeName>
    </component>
</protein>
<dbReference type="EC" id="3.6.1.15" evidence="4"/>
<dbReference type="EC" id="2.7.7.48" evidence="6"/>
<dbReference type="EC" id="3.4.22.66" evidence="7"/>
<dbReference type="EMBL" id="AF182760">
    <property type="protein sequence ID" value="AAF04560.1"/>
    <property type="molecule type" value="Genomic_RNA"/>
</dbReference>
<dbReference type="RefSeq" id="NP_051035.1">
    <property type="nucleotide sequence ID" value="NC_000940.1"/>
</dbReference>
<dbReference type="PDB" id="2MXD">
    <property type="method" value="NMR"/>
    <property type="chains" value="A=948-1006"/>
</dbReference>
<dbReference type="PDBsum" id="2MXD"/>
<dbReference type="BMRB" id="Q9QEJ5"/>
<dbReference type="SMR" id="Q9QEJ5"/>
<dbReference type="MEROPS" id="C24.003"/>
<dbReference type="KEGG" id="vg:1457802"/>
<dbReference type="EvolutionaryTrace" id="Q9QEJ5"/>
<dbReference type="Proteomes" id="UP000166743">
    <property type="component" value="Segment"/>
</dbReference>
<dbReference type="GO" id="GO:0030430">
    <property type="term" value="C:host cell cytoplasm"/>
    <property type="evidence" value="ECO:0007669"/>
    <property type="project" value="UniProtKB-SubCell"/>
</dbReference>
<dbReference type="GO" id="GO:0019028">
    <property type="term" value="C:viral capsid"/>
    <property type="evidence" value="ECO:0007669"/>
    <property type="project" value="UniProtKB-KW"/>
</dbReference>
<dbReference type="GO" id="GO:0005524">
    <property type="term" value="F:ATP binding"/>
    <property type="evidence" value="ECO:0007669"/>
    <property type="project" value="UniProtKB-KW"/>
</dbReference>
<dbReference type="GO" id="GO:0004197">
    <property type="term" value="F:cysteine-type endopeptidase activity"/>
    <property type="evidence" value="ECO:0007669"/>
    <property type="project" value="InterPro"/>
</dbReference>
<dbReference type="GO" id="GO:0017111">
    <property type="term" value="F:ribonucleoside triphosphate phosphatase activity"/>
    <property type="evidence" value="ECO:0007669"/>
    <property type="project" value="UniProtKB-EC"/>
</dbReference>
<dbReference type="GO" id="GO:0003723">
    <property type="term" value="F:RNA binding"/>
    <property type="evidence" value="ECO:0007669"/>
    <property type="project" value="InterPro"/>
</dbReference>
<dbReference type="GO" id="GO:0003724">
    <property type="term" value="F:RNA helicase activity"/>
    <property type="evidence" value="ECO:0007669"/>
    <property type="project" value="InterPro"/>
</dbReference>
<dbReference type="GO" id="GO:0003968">
    <property type="term" value="F:RNA-directed RNA polymerase activity"/>
    <property type="evidence" value="ECO:0007669"/>
    <property type="project" value="UniProtKB-KW"/>
</dbReference>
<dbReference type="GO" id="GO:0006260">
    <property type="term" value="P:DNA replication"/>
    <property type="evidence" value="ECO:0007669"/>
    <property type="project" value="UniProtKB-KW"/>
</dbReference>
<dbReference type="GO" id="GO:0006351">
    <property type="term" value="P:DNA-templated transcription"/>
    <property type="evidence" value="ECO:0007669"/>
    <property type="project" value="InterPro"/>
</dbReference>
<dbReference type="GO" id="GO:0006508">
    <property type="term" value="P:proteolysis"/>
    <property type="evidence" value="ECO:0007669"/>
    <property type="project" value="UniProtKB-KW"/>
</dbReference>
<dbReference type="GO" id="GO:0039694">
    <property type="term" value="P:viral RNA genome replication"/>
    <property type="evidence" value="ECO:0007669"/>
    <property type="project" value="InterPro"/>
</dbReference>
<dbReference type="CDD" id="cd23192">
    <property type="entry name" value="Caliciviridae_RdRp"/>
    <property type="match status" value="1"/>
</dbReference>
<dbReference type="CDD" id="cd00205">
    <property type="entry name" value="rhv_like"/>
    <property type="match status" value="1"/>
</dbReference>
<dbReference type="Gene3D" id="1.10.260.110">
    <property type="match status" value="1"/>
</dbReference>
<dbReference type="Gene3D" id="1.20.960.20">
    <property type="match status" value="1"/>
</dbReference>
<dbReference type="Gene3D" id="2.60.120.20">
    <property type="match status" value="1"/>
</dbReference>
<dbReference type="Gene3D" id="3.30.70.270">
    <property type="match status" value="2"/>
</dbReference>
<dbReference type="Gene3D" id="6.10.250.3230">
    <property type="match status" value="1"/>
</dbReference>
<dbReference type="Gene3D" id="3.40.50.300">
    <property type="entry name" value="P-loop containing nucleotide triphosphate hydrolases"/>
    <property type="match status" value="1"/>
</dbReference>
<dbReference type="InterPro" id="IPR004005">
    <property type="entry name" value="Calicivirus_coat"/>
</dbReference>
<dbReference type="InterPro" id="IPR043502">
    <property type="entry name" value="DNA/RNA_pol_sf"/>
</dbReference>
<dbReference type="InterPro" id="IPR004004">
    <property type="entry name" value="Helic/Pol/Pept_Calicivir-typ"/>
</dbReference>
<dbReference type="InterPro" id="IPR000605">
    <property type="entry name" value="Helicase_SF3_ssDNA/RNA_vir"/>
</dbReference>
<dbReference type="InterPro" id="IPR014759">
    <property type="entry name" value="Helicase_SF3_ssRNA_vir"/>
</dbReference>
<dbReference type="InterPro" id="IPR027417">
    <property type="entry name" value="P-loop_NTPase"/>
</dbReference>
<dbReference type="InterPro" id="IPR000317">
    <property type="entry name" value="Peptidase_C24"/>
</dbReference>
<dbReference type="InterPro" id="IPR009003">
    <property type="entry name" value="Peptidase_S1_PA"/>
</dbReference>
<dbReference type="InterPro" id="IPR043128">
    <property type="entry name" value="Rev_trsase/Diguanyl_cyclase"/>
</dbReference>
<dbReference type="InterPro" id="IPR033703">
    <property type="entry name" value="Rhv-like"/>
</dbReference>
<dbReference type="InterPro" id="IPR001205">
    <property type="entry name" value="RNA-dir_pol_C"/>
</dbReference>
<dbReference type="InterPro" id="IPR007094">
    <property type="entry name" value="RNA-dir_pol_PSvirus"/>
</dbReference>
<dbReference type="InterPro" id="IPR029053">
    <property type="entry name" value="Viral_coat"/>
</dbReference>
<dbReference type="InterPro" id="IPR049434">
    <property type="entry name" value="VPg"/>
</dbReference>
<dbReference type="Pfam" id="PF00915">
    <property type="entry name" value="Calici_coat"/>
    <property type="match status" value="1"/>
</dbReference>
<dbReference type="Pfam" id="PF03510">
    <property type="entry name" value="Peptidase_C24"/>
    <property type="match status" value="1"/>
</dbReference>
<dbReference type="Pfam" id="PF00680">
    <property type="entry name" value="RdRP_1"/>
    <property type="match status" value="1"/>
</dbReference>
<dbReference type="Pfam" id="PF00910">
    <property type="entry name" value="RNA_helicase"/>
    <property type="match status" value="1"/>
</dbReference>
<dbReference type="Pfam" id="PF20915">
    <property type="entry name" value="VPg"/>
    <property type="match status" value="1"/>
</dbReference>
<dbReference type="PRINTS" id="PR00916">
    <property type="entry name" value="2CENDOPTASE"/>
</dbReference>
<dbReference type="PRINTS" id="PR00918">
    <property type="entry name" value="CALICVIRUSNS"/>
</dbReference>
<dbReference type="SUPFAM" id="SSF56672">
    <property type="entry name" value="DNA/RNA polymerases"/>
    <property type="match status" value="1"/>
</dbReference>
<dbReference type="SUPFAM" id="SSF52540">
    <property type="entry name" value="P-loop containing nucleoside triphosphate hydrolases"/>
    <property type="match status" value="1"/>
</dbReference>
<dbReference type="SUPFAM" id="SSF88633">
    <property type="entry name" value="Positive stranded ssRNA viruses"/>
    <property type="match status" value="1"/>
</dbReference>
<dbReference type="SUPFAM" id="SSF50494">
    <property type="entry name" value="Trypsin-like serine proteases"/>
    <property type="match status" value="1"/>
</dbReference>
<dbReference type="PROSITE" id="PS51894">
    <property type="entry name" value="CV_3CL_PRO"/>
    <property type="match status" value="1"/>
</dbReference>
<dbReference type="PROSITE" id="PS50507">
    <property type="entry name" value="RDRP_SSRNA_POS"/>
    <property type="match status" value="1"/>
</dbReference>
<dbReference type="PROSITE" id="PS51218">
    <property type="entry name" value="SF3_HELICASE_2"/>
    <property type="match status" value="1"/>
</dbReference>